<organism>
    <name type="scientific">Desulfosudis oleivorans (strain DSM 6200 / JCM 39069 / Hxd3)</name>
    <name type="common">Desulfococcus oleovorans</name>
    <dbReference type="NCBI Taxonomy" id="96561"/>
    <lineage>
        <taxon>Bacteria</taxon>
        <taxon>Pseudomonadati</taxon>
        <taxon>Thermodesulfobacteriota</taxon>
        <taxon>Desulfobacteria</taxon>
        <taxon>Desulfobacterales</taxon>
        <taxon>Desulfosudaceae</taxon>
        <taxon>Desulfosudis</taxon>
    </lineage>
</organism>
<dbReference type="EMBL" id="CP000859">
    <property type="protein sequence ID" value="ABW65880.1"/>
    <property type="molecule type" value="Genomic_DNA"/>
</dbReference>
<dbReference type="RefSeq" id="WP_012173499.1">
    <property type="nucleotide sequence ID" value="NC_009943.1"/>
</dbReference>
<dbReference type="SMR" id="A8ZRW3"/>
<dbReference type="STRING" id="96561.Dole_0070"/>
<dbReference type="KEGG" id="dol:Dole_0070"/>
<dbReference type="eggNOG" id="COG0443">
    <property type="taxonomic scope" value="Bacteria"/>
</dbReference>
<dbReference type="HOGENOM" id="CLU_005965_2_1_7"/>
<dbReference type="OrthoDB" id="9766019at2"/>
<dbReference type="Proteomes" id="UP000008561">
    <property type="component" value="Chromosome"/>
</dbReference>
<dbReference type="GO" id="GO:0005524">
    <property type="term" value="F:ATP binding"/>
    <property type="evidence" value="ECO:0007669"/>
    <property type="project" value="UniProtKB-UniRule"/>
</dbReference>
<dbReference type="GO" id="GO:0140662">
    <property type="term" value="F:ATP-dependent protein folding chaperone"/>
    <property type="evidence" value="ECO:0007669"/>
    <property type="project" value="InterPro"/>
</dbReference>
<dbReference type="GO" id="GO:0051082">
    <property type="term" value="F:unfolded protein binding"/>
    <property type="evidence" value="ECO:0007669"/>
    <property type="project" value="InterPro"/>
</dbReference>
<dbReference type="CDD" id="cd10234">
    <property type="entry name" value="ASKHA_NBD_HSP70_DnaK-like"/>
    <property type="match status" value="1"/>
</dbReference>
<dbReference type="FunFam" id="2.60.34.10:FF:000014">
    <property type="entry name" value="Chaperone protein DnaK HSP70"/>
    <property type="match status" value="1"/>
</dbReference>
<dbReference type="FunFam" id="3.30.420.40:FF:000020">
    <property type="entry name" value="Chaperone protein HscA homolog"/>
    <property type="match status" value="1"/>
</dbReference>
<dbReference type="FunFam" id="1.20.1270.10:FF:000001">
    <property type="entry name" value="Molecular chaperone DnaK"/>
    <property type="match status" value="1"/>
</dbReference>
<dbReference type="FunFam" id="3.30.420.40:FF:000004">
    <property type="entry name" value="Molecular chaperone DnaK"/>
    <property type="match status" value="1"/>
</dbReference>
<dbReference type="FunFam" id="3.90.640.10:FF:000003">
    <property type="entry name" value="Molecular chaperone DnaK"/>
    <property type="match status" value="1"/>
</dbReference>
<dbReference type="Gene3D" id="1.20.1270.10">
    <property type="match status" value="1"/>
</dbReference>
<dbReference type="Gene3D" id="3.30.420.40">
    <property type="match status" value="2"/>
</dbReference>
<dbReference type="Gene3D" id="3.90.640.10">
    <property type="entry name" value="Actin, Chain A, domain 4"/>
    <property type="match status" value="1"/>
</dbReference>
<dbReference type="Gene3D" id="2.60.34.10">
    <property type="entry name" value="Substrate Binding Domain Of DNAk, Chain A, domain 1"/>
    <property type="match status" value="1"/>
</dbReference>
<dbReference type="HAMAP" id="MF_00332">
    <property type="entry name" value="DnaK"/>
    <property type="match status" value="1"/>
</dbReference>
<dbReference type="InterPro" id="IPR043129">
    <property type="entry name" value="ATPase_NBD"/>
</dbReference>
<dbReference type="InterPro" id="IPR012725">
    <property type="entry name" value="Chaperone_DnaK"/>
</dbReference>
<dbReference type="InterPro" id="IPR018181">
    <property type="entry name" value="Heat_shock_70_CS"/>
</dbReference>
<dbReference type="InterPro" id="IPR029048">
    <property type="entry name" value="HSP70_C_sf"/>
</dbReference>
<dbReference type="InterPro" id="IPR029047">
    <property type="entry name" value="HSP70_peptide-bd_sf"/>
</dbReference>
<dbReference type="InterPro" id="IPR013126">
    <property type="entry name" value="Hsp_70_fam"/>
</dbReference>
<dbReference type="NCBIfam" id="NF001413">
    <property type="entry name" value="PRK00290.1"/>
    <property type="match status" value="1"/>
</dbReference>
<dbReference type="NCBIfam" id="NF003520">
    <property type="entry name" value="PRK05183.1"/>
    <property type="match status" value="1"/>
</dbReference>
<dbReference type="NCBIfam" id="TIGR02350">
    <property type="entry name" value="prok_dnaK"/>
    <property type="match status" value="1"/>
</dbReference>
<dbReference type="PANTHER" id="PTHR19375">
    <property type="entry name" value="HEAT SHOCK PROTEIN 70KDA"/>
    <property type="match status" value="1"/>
</dbReference>
<dbReference type="Pfam" id="PF00012">
    <property type="entry name" value="HSP70"/>
    <property type="match status" value="1"/>
</dbReference>
<dbReference type="PRINTS" id="PR00301">
    <property type="entry name" value="HEATSHOCK70"/>
</dbReference>
<dbReference type="SUPFAM" id="SSF53067">
    <property type="entry name" value="Actin-like ATPase domain"/>
    <property type="match status" value="2"/>
</dbReference>
<dbReference type="SUPFAM" id="SSF100934">
    <property type="entry name" value="Heat shock protein 70kD (HSP70), C-terminal subdomain"/>
    <property type="match status" value="1"/>
</dbReference>
<dbReference type="SUPFAM" id="SSF100920">
    <property type="entry name" value="Heat shock protein 70kD (HSP70), peptide-binding domain"/>
    <property type="match status" value="1"/>
</dbReference>
<dbReference type="PROSITE" id="PS00297">
    <property type="entry name" value="HSP70_1"/>
    <property type="match status" value="1"/>
</dbReference>
<dbReference type="PROSITE" id="PS00329">
    <property type="entry name" value="HSP70_2"/>
    <property type="match status" value="1"/>
</dbReference>
<dbReference type="PROSITE" id="PS01036">
    <property type="entry name" value="HSP70_3"/>
    <property type="match status" value="1"/>
</dbReference>
<proteinExistence type="inferred from homology"/>
<gene>
    <name evidence="1" type="primary">dnaK</name>
    <name type="ordered locus">Dole_0070</name>
</gene>
<name>DNAK_DESOH</name>
<accession>A8ZRW3</accession>
<protein>
    <recommendedName>
        <fullName evidence="1">Chaperone protein DnaK</fullName>
    </recommendedName>
    <alternativeName>
        <fullName evidence="1">HSP70</fullName>
    </alternativeName>
    <alternativeName>
        <fullName evidence="1">Heat shock 70 kDa protein</fullName>
    </alternativeName>
    <alternativeName>
        <fullName evidence="1">Heat shock protein 70</fullName>
    </alternativeName>
</protein>
<keyword id="KW-0067">ATP-binding</keyword>
<keyword id="KW-0143">Chaperone</keyword>
<keyword id="KW-0547">Nucleotide-binding</keyword>
<keyword id="KW-0597">Phosphoprotein</keyword>
<keyword id="KW-1185">Reference proteome</keyword>
<keyword id="KW-0346">Stress response</keyword>
<sequence>MAKTIGIDLGTTNSCVAVMEGGEAKVITNPEGGRTTPSIVAINEDGERLVGQVAKRQAITNPENTVFGVKRLIGRKFDSAEVQHDIKVLPYKIEKAGNGDLRINLRDKQYSPAEISSFILADIKHTAEEYLGEKVTDAVITVPAYFSDSQRQATKDAGKIAGLNVLRIINEPTAASLAYGLDKKKDEKIAVFDLGGGTFDISVLEIGDGVFEVKSTNGDTHLGGEDFDLRVVDYLASEFKKDQGIDLRQDKMALQRLKEAAEKAKMELSSSPQTDINLPFITADANGPKHLNIKLSRAKLEELVEDLLDKMAKPCETALKDSGFSASQIDEVILVGGMTRMPAVQDRVKKIFGKAPNKSVNPDEVVAIGAAIQAGVLQGDVNDVLLLDVTPLSLGIETLGGVMTKLIEKNTTIPTKKSQVFSTAADNQPAVSIHVLQGEREMAANNKTLGRFDLADIPAAPRGVPQIEVTFDIDANGIVAVSAKDLGTGKEQSIKITASSGLSKEEIDKLVKDAEAHAEEDKNKRELVEAQNTADALIYQTEKSIKELGEDKLDNATKAEIQAKIEELKKAKETTDTDQIKKLSDELTQASHKLAEAMYQKASQEGQQASGGDAGASADGGTSSAAGGDDDVIDADYEEAGK</sequence>
<feature type="chain" id="PRO_1000119699" description="Chaperone protein DnaK">
    <location>
        <begin position="1"/>
        <end position="642"/>
    </location>
</feature>
<feature type="region of interest" description="Disordered" evidence="2">
    <location>
        <begin position="594"/>
        <end position="642"/>
    </location>
</feature>
<feature type="compositionally biased region" description="Low complexity" evidence="2">
    <location>
        <begin position="602"/>
        <end position="627"/>
    </location>
</feature>
<feature type="compositionally biased region" description="Acidic residues" evidence="2">
    <location>
        <begin position="628"/>
        <end position="642"/>
    </location>
</feature>
<feature type="modified residue" description="Phosphothreonine; by autocatalysis" evidence="1">
    <location>
        <position position="198"/>
    </location>
</feature>
<evidence type="ECO:0000255" key="1">
    <source>
        <dbReference type="HAMAP-Rule" id="MF_00332"/>
    </source>
</evidence>
<evidence type="ECO:0000256" key="2">
    <source>
        <dbReference type="SAM" id="MobiDB-lite"/>
    </source>
</evidence>
<comment type="function">
    <text evidence="1">Acts as a chaperone.</text>
</comment>
<comment type="induction">
    <text evidence="1">By stress conditions e.g. heat shock.</text>
</comment>
<comment type="similarity">
    <text evidence="1">Belongs to the heat shock protein 70 family.</text>
</comment>
<reference key="1">
    <citation type="submission" date="2007-10" db="EMBL/GenBank/DDBJ databases">
        <title>Complete sequence of Desulfococcus oleovorans Hxd3.</title>
        <authorList>
            <consortium name="US DOE Joint Genome Institute"/>
            <person name="Copeland A."/>
            <person name="Lucas S."/>
            <person name="Lapidus A."/>
            <person name="Barry K."/>
            <person name="Glavina del Rio T."/>
            <person name="Dalin E."/>
            <person name="Tice H."/>
            <person name="Pitluck S."/>
            <person name="Kiss H."/>
            <person name="Brettin T."/>
            <person name="Bruce D."/>
            <person name="Detter J.C."/>
            <person name="Han C."/>
            <person name="Schmutz J."/>
            <person name="Larimer F."/>
            <person name="Land M."/>
            <person name="Hauser L."/>
            <person name="Kyrpides N."/>
            <person name="Kim E."/>
            <person name="Wawrik B."/>
            <person name="Richardson P."/>
        </authorList>
    </citation>
    <scope>NUCLEOTIDE SEQUENCE [LARGE SCALE GENOMIC DNA]</scope>
    <source>
        <strain>DSM 6200 / JCM 39069 / Hxd3</strain>
    </source>
</reference>